<gene>
    <name type="primary">SEC13</name>
    <name type="ORF">PICST_76043</name>
</gene>
<comment type="function">
    <text evidence="2">Component of the coat protein complex II (COPII) which promotes the formation of transport vesicles from the endoplasmic reticulum (ER). The coat has two main functions, the physical deformation of the endoplasmic reticulum membrane into vesicles and the selection of cargo molecules. It also functions as a component of the nuclear pore complex (NPC). NPC components, collectively referred to as nucleoporins (NUPs), can play the role of both NPC structural components and of docking or interaction partners for transiently associated nuclear transport factors. SEC13 is required for efficient mRNA export from the nucleus to the cytoplasm and for correct nuclear pore biogenesis and distribution (By similarity).</text>
</comment>
<comment type="subunit">
    <text evidence="2">The COPII coat is composed of at least 5 proteins: the SEC23/24 complex, the SEC13/31 complex, and the protein SAR1. Component of the nuclear pore complex (NPC). NPC constitutes the exclusive means of nucleocytoplasmic transport. NPCs allow the passive diffusion of ions and small molecules and the active, nuclear transport receptor-mediated bidirectional transport of macromolecules such as proteins, RNAs, ribonucleoparticles (RNPs), and ribosomal subunits across the nuclear envelope. Due to its 8-fold rotational symmetry, all subunits are present with 8 copies or multiples thereof.</text>
</comment>
<comment type="subcellular location">
    <subcellularLocation>
        <location evidence="1">Cytoplasmic vesicle</location>
        <location evidence="1">COPII-coated vesicle membrane</location>
        <topology evidence="1">Peripheral membrane protein</topology>
        <orientation evidence="1">Cytoplasmic side</orientation>
    </subcellularLocation>
    <subcellularLocation>
        <location evidence="1">Endoplasmic reticulum membrane</location>
        <topology evidence="1">Peripheral membrane protein</topology>
        <orientation evidence="1">Cytoplasmic side</orientation>
    </subcellularLocation>
    <subcellularLocation>
        <location evidence="2">Nucleus</location>
        <location evidence="2">Nuclear pore complex</location>
    </subcellularLocation>
</comment>
<comment type="similarity">
    <text evidence="3">Belongs to the WD repeat SEC13 family.</text>
</comment>
<keyword id="KW-0968">Cytoplasmic vesicle</keyword>
<keyword id="KW-0256">Endoplasmic reticulum</keyword>
<keyword id="KW-0931">ER-Golgi transport</keyword>
<keyword id="KW-0472">Membrane</keyword>
<keyword id="KW-0509">mRNA transport</keyword>
<keyword id="KW-0906">Nuclear pore complex</keyword>
<keyword id="KW-0539">Nucleus</keyword>
<keyword id="KW-0653">Protein transport</keyword>
<keyword id="KW-1185">Reference proteome</keyword>
<keyword id="KW-0677">Repeat</keyword>
<keyword id="KW-0811">Translocation</keyword>
<keyword id="KW-0813">Transport</keyword>
<keyword id="KW-0853">WD repeat</keyword>
<proteinExistence type="inferred from homology"/>
<sequence length="302" mass="33283">MVTIGNAHNDLIHDAVLDYYGKRLATCSSDKSINIFDIDGTESYKLVSTLTGHDGPVWQVSWAHPKFGSILASCSFDGKALIWKEQPETQQWSIIAEHSVHQASVNSVSWAPHELGAVLLCASSDGKVSVVDFNDDGTTSHVVFDAHAIGANSASWAPLSSTPSPNQKDAASLKQQRRFVTCGSDNLAKIWKYDAANNTYVEEARLEGHTDWVRDVAWSPSMLVRTYIATASQDRTVLIWTQDKAGKWQKQLLTEDKFPDVCWRCSWSLSGNILAVSGGDNKVSLWKENLQGKWESAGEVVQ</sequence>
<feature type="chain" id="PRO_0000295422" description="Protein transport protein SEC13">
    <location>
        <begin position="1"/>
        <end position="302"/>
    </location>
</feature>
<feature type="repeat" description="WD 1">
    <location>
        <begin position="7"/>
        <end position="46"/>
    </location>
</feature>
<feature type="repeat" description="WD 2">
    <location>
        <begin position="52"/>
        <end position="93"/>
    </location>
</feature>
<feature type="repeat" description="WD 3">
    <location>
        <begin position="100"/>
        <end position="141"/>
    </location>
</feature>
<feature type="repeat" description="WD 4">
    <location>
        <begin position="162"/>
        <end position="201"/>
    </location>
</feature>
<feature type="repeat" description="WD 5">
    <location>
        <begin position="208"/>
        <end position="250"/>
    </location>
</feature>
<feature type="repeat" description="WD 6">
    <location>
        <begin position="257"/>
        <end position="296"/>
    </location>
</feature>
<evidence type="ECO:0000250" key="1"/>
<evidence type="ECO:0000250" key="2">
    <source>
        <dbReference type="UniProtKB" id="Q04491"/>
    </source>
</evidence>
<evidence type="ECO:0000305" key="3"/>
<protein>
    <recommendedName>
        <fullName>Protein transport protein SEC13</fullName>
    </recommendedName>
</protein>
<reference key="1">
    <citation type="journal article" date="2007" name="Nat. Biotechnol.">
        <title>Genome sequence of the lignocellulose-bioconverting and xylose-fermenting yeast Pichia stipitis.</title>
        <authorList>
            <person name="Jeffries T.W."/>
            <person name="Grigoriev I.V."/>
            <person name="Grimwood J."/>
            <person name="Laplaza J.M."/>
            <person name="Aerts A."/>
            <person name="Salamov A."/>
            <person name="Schmutz J."/>
            <person name="Lindquist E."/>
            <person name="Dehal P."/>
            <person name="Shapiro H."/>
            <person name="Jin Y.-S."/>
            <person name="Passoth V."/>
            <person name="Richardson P.M."/>
        </authorList>
    </citation>
    <scope>NUCLEOTIDE SEQUENCE [LARGE SCALE GENOMIC DNA]</scope>
    <source>
        <strain>ATCC 58785 / CBS 6054 / NBRC 10063 / NRRL Y-11545</strain>
    </source>
</reference>
<accession>A3LNW3</accession>
<dbReference type="EMBL" id="CP000496">
    <property type="protein sequence ID" value="ABN64392.2"/>
    <property type="molecule type" value="Genomic_DNA"/>
</dbReference>
<dbReference type="RefSeq" id="XP_001382421.2">
    <property type="nucleotide sequence ID" value="XM_001382384.1"/>
</dbReference>
<dbReference type="SMR" id="A3LNW3"/>
<dbReference type="FunCoup" id="A3LNW3">
    <property type="interactions" value="1123"/>
</dbReference>
<dbReference type="STRING" id="322104.A3LNW3"/>
<dbReference type="GeneID" id="4836662"/>
<dbReference type="KEGG" id="pic:PICST_76043"/>
<dbReference type="eggNOG" id="KOG1332">
    <property type="taxonomic scope" value="Eukaryota"/>
</dbReference>
<dbReference type="HOGENOM" id="CLU_032441_0_1_1"/>
<dbReference type="InParanoid" id="A3LNW3"/>
<dbReference type="OMA" id="IWKEEGD"/>
<dbReference type="OrthoDB" id="364224at2759"/>
<dbReference type="Proteomes" id="UP000002258">
    <property type="component" value="Chromosome 2"/>
</dbReference>
<dbReference type="GO" id="GO:0030127">
    <property type="term" value="C:COPII vesicle coat"/>
    <property type="evidence" value="ECO:0007669"/>
    <property type="project" value="EnsemblFungi"/>
</dbReference>
<dbReference type="GO" id="GO:0005789">
    <property type="term" value="C:endoplasmic reticulum membrane"/>
    <property type="evidence" value="ECO:0007669"/>
    <property type="project" value="UniProtKB-SubCell"/>
</dbReference>
<dbReference type="GO" id="GO:0061700">
    <property type="term" value="C:GATOR2 complex"/>
    <property type="evidence" value="ECO:0007669"/>
    <property type="project" value="EnsemblFungi"/>
</dbReference>
<dbReference type="GO" id="GO:0031080">
    <property type="term" value="C:nuclear pore outer ring"/>
    <property type="evidence" value="ECO:0007669"/>
    <property type="project" value="EnsemblFungi"/>
</dbReference>
<dbReference type="GO" id="GO:0005198">
    <property type="term" value="F:structural molecule activity"/>
    <property type="evidence" value="ECO:0007669"/>
    <property type="project" value="EnsemblFungi"/>
</dbReference>
<dbReference type="GO" id="GO:0090114">
    <property type="term" value="P:COPII-coated vesicle budding"/>
    <property type="evidence" value="ECO:0007669"/>
    <property type="project" value="EnsemblFungi"/>
</dbReference>
<dbReference type="GO" id="GO:0036503">
    <property type="term" value="P:ERAD pathway"/>
    <property type="evidence" value="ECO:0007669"/>
    <property type="project" value="EnsemblFungi"/>
</dbReference>
<dbReference type="GO" id="GO:0051028">
    <property type="term" value="P:mRNA transport"/>
    <property type="evidence" value="ECO:0007669"/>
    <property type="project" value="UniProtKB-KW"/>
</dbReference>
<dbReference type="GO" id="GO:0051664">
    <property type="term" value="P:nuclear pore localization"/>
    <property type="evidence" value="ECO:0007669"/>
    <property type="project" value="EnsemblFungi"/>
</dbReference>
<dbReference type="GO" id="GO:0045893">
    <property type="term" value="P:positive regulation of DNA-templated transcription"/>
    <property type="evidence" value="ECO:0007669"/>
    <property type="project" value="EnsemblFungi"/>
</dbReference>
<dbReference type="GO" id="GO:1902953">
    <property type="term" value="P:positive regulation of ER to Golgi vesicle-mediated transport"/>
    <property type="evidence" value="ECO:0007669"/>
    <property type="project" value="EnsemblFungi"/>
</dbReference>
<dbReference type="GO" id="GO:0070863">
    <property type="term" value="P:positive regulation of protein exit from endoplasmic reticulum"/>
    <property type="evidence" value="ECO:0007669"/>
    <property type="project" value="EnsemblFungi"/>
</dbReference>
<dbReference type="GO" id="GO:1904263">
    <property type="term" value="P:positive regulation of TORC1 signaling"/>
    <property type="evidence" value="ECO:0007669"/>
    <property type="project" value="EnsemblFungi"/>
</dbReference>
<dbReference type="GO" id="GO:0032527">
    <property type="term" value="P:protein exit from endoplasmic reticulum"/>
    <property type="evidence" value="ECO:0007669"/>
    <property type="project" value="TreeGrafter"/>
</dbReference>
<dbReference type="GO" id="GO:0006606">
    <property type="term" value="P:protein import into nucleus"/>
    <property type="evidence" value="ECO:0007669"/>
    <property type="project" value="TreeGrafter"/>
</dbReference>
<dbReference type="FunFam" id="2.130.10.10:FF:000017">
    <property type="entry name" value="SEC13 homolog (S. cerevisiae)"/>
    <property type="match status" value="1"/>
</dbReference>
<dbReference type="Gene3D" id="2.130.10.10">
    <property type="entry name" value="YVTN repeat-like/Quinoprotein amine dehydrogenase"/>
    <property type="match status" value="1"/>
</dbReference>
<dbReference type="InterPro" id="IPR037363">
    <property type="entry name" value="Sec13/Seh1_fam"/>
</dbReference>
<dbReference type="InterPro" id="IPR015943">
    <property type="entry name" value="WD40/YVTN_repeat-like_dom_sf"/>
</dbReference>
<dbReference type="InterPro" id="IPR036322">
    <property type="entry name" value="WD40_repeat_dom_sf"/>
</dbReference>
<dbReference type="InterPro" id="IPR001680">
    <property type="entry name" value="WD40_rpt"/>
</dbReference>
<dbReference type="PANTHER" id="PTHR11024">
    <property type="entry name" value="NUCLEAR PORE COMPLEX PROTEIN SEC13 / SEH1 FAMILY MEMBER"/>
    <property type="match status" value="1"/>
</dbReference>
<dbReference type="PANTHER" id="PTHR11024:SF2">
    <property type="entry name" value="PROTEIN SEC13 HOMOLOG"/>
    <property type="match status" value="1"/>
</dbReference>
<dbReference type="Pfam" id="PF00400">
    <property type="entry name" value="WD40"/>
    <property type="match status" value="5"/>
</dbReference>
<dbReference type="SMART" id="SM00320">
    <property type="entry name" value="WD40"/>
    <property type="match status" value="6"/>
</dbReference>
<dbReference type="SUPFAM" id="SSF50978">
    <property type="entry name" value="WD40 repeat-like"/>
    <property type="match status" value="1"/>
</dbReference>
<dbReference type="PROSITE" id="PS50082">
    <property type="entry name" value="WD_REPEATS_2"/>
    <property type="match status" value="2"/>
</dbReference>
<dbReference type="PROSITE" id="PS50294">
    <property type="entry name" value="WD_REPEATS_REGION"/>
    <property type="match status" value="1"/>
</dbReference>
<organism>
    <name type="scientific">Scheffersomyces stipitis (strain ATCC 58785 / CBS 6054 / NBRC 10063 / NRRL Y-11545)</name>
    <name type="common">Yeast</name>
    <name type="synonym">Pichia stipitis</name>
    <dbReference type="NCBI Taxonomy" id="322104"/>
    <lineage>
        <taxon>Eukaryota</taxon>
        <taxon>Fungi</taxon>
        <taxon>Dikarya</taxon>
        <taxon>Ascomycota</taxon>
        <taxon>Saccharomycotina</taxon>
        <taxon>Pichiomycetes</taxon>
        <taxon>Debaryomycetaceae</taxon>
        <taxon>Scheffersomyces</taxon>
    </lineage>
</organism>
<name>SEC13_PICST</name>